<accession>A7H4R2</accession>
<protein>
    <recommendedName>
        <fullName evidence="1">Large ribosomal subunit protein bL33</fullName>
    </recommendedName>
    <alternativeName>
        <fullName evidence="2">50S ribosomal protein L33</fullName>
    </alternativeName>
</protein>
<gene>
    <name evidence="1" type="primary">rpmG</name>
    <name type="ordered locus">JJD26997_1464</name>
</gene>
<keyword id="KW-0687">Ribonucleoprotein</keyword>
<keyword id="KW-0689">Ribosomal protein</keyword>
<comment type="similarity">
    <text evidence="1">Belongs to the bacterial ribosomal protein bL33 family.</text>
</comment>
<evidence type="ECO:0000255" key="1">
    <source>
        <dbReference type="HAMAP-Rule" id="MF_00294"/>
    </source>
</evidence>
<evidence type="ECO:0000305" key="2"/>
<feature type="chain" id="PRO_0000356418" description="Large ribosomal subunit protein bL33">
    <location>
        <begin position="1"/>
        <end position="52"/>
    </location>
</feature>
<proteinExistence type="inferred from homology"/>
<reference key="1">
    <citation type="submission" date="2007-07" db="EMBL/GenBank/DDBJ databases">
        <title>Complete genome sequence of Campylobacter jejuni subsp doylei 269.97 isolated from human blood.</title>
        <authorList>
            <person name="Fouts D.E."/>
            <person name="Mongodin E.F."/>
            <person name="Puiu D."/>
            <person name="Sebastian Y."/>
            <person name="Miller W.G."/>
            <person name="Mandrell R.E."/>
            <person name="Lastovica A.J."/>
            <person name="Nelson K.E."/>
        </authorList>
    </citation>
    <scope>NUCLEOTIDE SEQUENCE [LARGE SCALE GENOMIC DNA]</scope>
    <source>
        <strain>ATCC BAA-1458 / RM4099 / 269.97</strain>
    </source>
</reference>
<organism>
    <name type="scientific">Campylobacter jejuni subsp. doylei (strain ATCC BAA-1458 / RM4099 / 269.97)</name>
    <dbReference type="NCBI Taxonomy" id="360109"/>
    <lineage>
        <taxon>Bacteria</taxon>
        <taxon>Pseudomonadati</taxon>
        <taxon>Campylobacterota</taxon>
        <taxon>Epsilonproteobacteria</taxon>
        <taxon>Campylobacterales</taxon>
        <taxon>Campylobacteraceae</taxon>
        <taxon>Campylobacter</taxon>
    </lineage>
</organism>
<name>RL33_CAMJD</name>
<sequence length="52" mass="6190">MRIKVGLKCEECGDINYSTYKNSKNTTEKLELKKYCPRLKKHTFHKEVKLKS</sequence>
<dbReference type="EMBL" id="CP000768">
    <property type="protein sequence ID" value="ABS44327.1"/>
    <property type="molecule type" value="Genomic_DNA"/>
</dbReference>
<dbReference type="SMR" id="A7H4R2"/>
<dbReference type="KEGG" id="cjd:JJD26997_1464"/>
<dbReference type="HOGENOM" id="CLU_190949_0_2_7"/>
<dbReference type="Proteomes" id="UP000002302">
    <property type="component" value="Chromosome"/>
</dbReference>
<dbReference type="GO" id="GO:0005737">
    <property type="term" value="C:cytoplasm"/>
    <property type="evidence" value="ECO:0007669"/>
    <property type="project" value="UniProtKB-ARBA"/>
</dbReference>
<dbReference type="GO" id="GO:1990904">
    <property type="term" value="C:ribonucleoprotein complex"/>
    <property type="evidence" value="ECO:0007669"/>
    <property type="project" value="UniProtKB-KW"/>
</dbReference>
<dbReference type="GO" id="GO:0005840">
    <property type="term" value="C:ribosome"/>
    <property type="evidence" value="ECO:0007669"/>
    <property type="project" value="UniProtKB-KW"/>
</dbReference>
<dbReference type="GO" id="GO:0003735">
    <property type="term" value="F:structural constituent of ribosome"/>
    <property type="evidence" value="ECO:0007669"/>
    <property type="project" value="InterPro"/>
</dbReference>
<dbReference type="GO" id="GO:0006412">
    <property type="term" value="P:translation"/>
    <property type="evidence" value="ECO:0007669"/>
    <property type="project" value="UniProtKB-UniRule"/>
</dbReference>
<dbReference type="Gene3D" id="2.20.28.120">
    <property type="entry name" value="Ribosomal protein L33"/>
    <property type="match status" value="1"/>
</dbReference>
<dbReference type="HAMAP" id="MF_00294">
    <property type="entry name" value="Ribosomal_bL33"/>
    <property type="match status" value="1"/>
</dbReference>
<dbReference type="InterPro" id="IPR001705">
    <property type="entry name" value="Ribosomal_bL33"/>
</dbReference>
<dbReference type="InterPro" id="IPR018264">
    <property type="entry name" value="Ribosomal_bL33_CS"/>
</dbReference>
<dbReference type="InterPro" id="IPR038584">
    <property type="entry name" value="Ribosomal_bL33_sf"/>
</dbReference>
<dbReference type="InterPro" id="IPR011332">
    <property type="entry name" value="Ribosomal_zn-bd"/>
</dbReference>
<dbReference type="NCBIfam" id="NF001764">
    <property type="entry name" value="PRK00504.1"/>
    <property type="match status" value="1"/>
</dbReference>
<dbReference type="NCBIfam" id="NF001860">
    <property type="entry name" value="PRK00595.1"/>
    <property type="match status" value="1"/>
</dbReference>
<dbReference type="NCBIfam" id="TIGR01023">
    <property type="entry name" value="rpmG_bact"/>
    <property type="match status" value="1"/>
</dbReference>
<dbReference type="PANTHER" id="PTHR43168">
    <property type="entry name" value="50S RIBOSOMAL PROTEIN L33, CHLOROPLASTIC"/>
    <property type="match status" value="1"/>
</dbReference>
<dbReference type="PANTHER" id="PTHR43168:SF6">
    <property type="entry name" value="LARGE RIBOSOMAL SUBUNIT PROTEIN BL33A"/>
    <property type="match status" value="1"/>
</dbReference>
<dbReference type="Pfam" id="PF00471">
    <property type="entry name" value="Ribosomal_L33"/>
    <property type="match status" value="1"/>
</dbReference>
<dbReference type="SUPFAM" id="SSF57829">
    <property type="entry name" value="Zn-binding ribosomal proteins"/>
    <property type="match status" value="1"/>
</dbReference>
<dbReference type="PROSITE" id="PS00582">
    <property type="entry name" value="RIBOSOMAL_L33"/>
    <property type="match status" value="1"/>
</dbReference>